<feature type="chain" id="PRO_0000190458" description="Ribonucleoside-diphosphate reductase small subunit">
    <location>
        <begin position="1"/>
        <end position="322"/>
    </location>
</feature>
<feature type="active site" evidence="2">
    <location>
        <position position="108"/>
    </location>
</feature>
<feature type="binding site" evidence="2">
    <location>
        <position position="70"/>
    </location>
    <ligand>
        <name>Fe cation</name>
        <dbReference type="ChEBI" id="CHEBI:24875"/>
        <label>1</label>
    </ligand>
</feature>
<feature type="binding site" evidence="2">
    <location>
        <position position="101"/>
    </location>
    <ligand>
        <name>Fe cation</name>
        <dbReference type="ChEBI" id="CHEBI:24875"/>
        <label>1</label>
    </ligand>
</feature>
<feature type="binding site" evidence="1">
    <location>
        <position position="101"/>
    </location>
    <ligand>
        <name>Fe cation</name>
        <dbReference type="ChEBI" id="CHEBI:24875"/>
        <label>2</label>
    </ligand>
</feature>
<feature type="binding site" evidence="2">
    <location>
        <position position="104"/>
    </location>
    <ligand>
        <name>Fe cation</name>
        <dbReference type="ChEBI" id="CHEBI:24875"/>
        <label>1</label>
    </ligand>
</feature>
<feature type="binding site" evidence="1">
    <location>
        <position position="163"/>
    </location>
    <ligand>
        <name>Fe cation</name>
        <dbReference type="ChEBI" id="CHEBI:24875"/>
        <label>2</label>
    </ligand>
</feature>
<feature type="binding site" evidence="1">
    <location>
        <position position="197"/>
    </location>
    <ligand>
        <name>Fe cation</name>
        <dbReference type="ChEBI" id="CHEBI:24875"/>
        <label>2</label>
    </ligand>
</feature>
<feature type="binding site" evidence="1">
    <location>
        <position position="200"/>
    </location>
    <ligand>
        <name>Fe cation</name>
        <dbReference type="ChEBI" id="CHEBI:24875"/>
        <label>2</label>
    </ligand>
</feature>
<reference key="1">
    <citation type="journal article" date="1993" name="Proc. Natl. Acad. Sci. U.S.A.">
        <title>Cloning, sequence determination, and regulation of the ribonucleotide reductase subunits from Plasmodium falciparum: a target for antimalarial therapy.</title>
        <authorList>
            <person name="Rubin H."/>
            <person name="Salem J.S."/>
            <person name="Li L.S."/>
            <person name="Yang F.D."/>
            <person name="Mama S."/>
            <person name="Wang Z.M."/>
            <person name="Fisher A."/>
            <person name="Hamann C.S."/>
            <person name="Cooperman B.S."/>
        </authorList>
    </citation>
    <scope>NUCLEOTIDE SEQUENCE [GENOMIC DNA]</scope>
</reference>
<accession>P50649</accession>
<evidence type="ECO:0000250" key="1"/>
<evidence type="ECO:0000255" key="2">
    <source>
        <dbReference type="PROSITE-ProRule" id="PRU10014"/>
    </source>
</evidence>
<evidence type="ECO:0000305" key="3"/>
<gene>
    <name type="primary">RNR2</name>
</gene>
<organism>
    <name type="scientific">Plasmodium falciparum (isolate FCR-3 / Gambia)</name>
    <dbReference type="NCBI Taxonomy" id="5838"/>
    <lineage>
        <taxon>Eukaryota</taxon>
        <taxon>Sar</taxon>
        <taxon>Alveolata</taxon>
        <taxon>Apicomplexa</taxon>
        <taxon>Aconoidasida</taxon>
        <taxon>Haemosporida</taxon>
        <taxon>Plasmodiidae</taxon>
        <taxon>Plasmodium</taxon>
        <taxon>Plasmodium (Laverania)</taxon>
    </lineage>
</organism>
<protein>
    <recommendedName>
        <fullName>Ribonucleoside-diphosphate reductase small subunit</fullName>
        <ecNumber>1.17.4.1</ecNumber>
    </recommendedName>
    <alternativeName>
        <fullName>Ribonucleotide reductase R2 subunit</fullName>
    </alternativeName>
    <alternativeName>
        <fullName>Ribonucleotide reductase small subunit</fullName>
    </alternativeName>
</protein>
<proteinExistence type="inferred from homology"/>
<dbReference type="EC" id="1.17.4.1"/>
<dbReference type="EMBL" id="L22058">
    <property type="protein sequence ID" value="AAA29754.1"/>
    <property type="molecule type" value="Genomic_DNA"/>
</dbReference>
<dbReference type="SMR" id="P50649"/>
<dbReference type="GO" id="GO:0046872">
    <property type="term" value="F:metal ion binding"/>
    <property type="evidence" value="ECO:0007669"/>
    <property type="project" value="UniProtKB-KW"/>
</dbReference>
<dbReference type="GO" id="GO:0004748">
    <property type="term" value="F:ribonucleoside-diphosphate reductase activity, thioredoxin disulfide as acceptor"/>
    <property type="evidence" value="ECO:0007669"/>
    <property type="project" value="UniProtKB-EC"/>
</dbReference>
<dbReference type="GO" id="GO:0009263">
    <property type="term" value="P:deoxyribonucleotide biosynthetic process"/>
    <property type="evidence" value="ECO:0007669"/>
    <property type="project" value="UniProtKB-KW"/>
</dbReference>
<dbReference type="CDD" id="cd01049">
    <property type="entry name" value="RNRR2"/>
    <property type="match status" value="1"/>
</dbReference>
<dbReference type="Gene3D" id="1.10.620.20">
    <property type="entry name" value="Ribonucleotide Reductase, subunit A"/>
    <property type="match status" value="1"/>
</dbReference>
<dbReference type="InterPro" id="IPR009078">
    <property type="entry name" value="Ferritin-like_SF"/>
</dbReference>
<dbReference type="InterPro" id="IPR012348">
    <property type="entry name" value="RNR-like"/>
</dbReference>
<dbReference type="InterPro" id="IPR033909">
    <property type="entry name" value="RNR_small"/>
</dbReference>
<dbReference type="InterPro" id="IPR030475">
    <property type="entry name" value="RNR_small_AS"/>
</dbReference>
<dbReference type="InterPro" id="IPR000358">
    <property type="entry name" value="RNR_small_fam"/>
</dbReference>
<dbReference type="PANTHER" id="PTHR23409">
    <property type="entry name" value="RIBONUCLEOSIDE-DIPHOSPHATE REDUCTASE SMALL CHAIN"/>
    <property type="match status" value="1"/>
</dbReference>
<dbReference type="PANTHER" id="PTHR23409:SF18">
    <property type="entry name" value="RIBONUCLEOSIDE-DIPHOSPHATE REDUCTASE SUBUNIT M2"/>
    <property type="match status" value="1"/>
</dbReference>
<dbReference type="Pfam" id="PF00268">
    <property type="entry name" value="Ribonuc_red_sm"/>
    <property type="match status" value="1"/>
</dbReference>
<dbReference type="SUPFAM" id="SSF47240">
    <property type="entry name" value="Ferritin-like"/>
    <property type="match status" value="1"/>
</dbReference>
<dbReference type="PROSITE" id="PS00368">
    <property type="entry name" value="RIBORED_SMALL"/>
    <property type="match status" value="1"/>
</dbReference>
<sequence length="322" mass="37372">MRRILNKESDRFTLYPILYPDVFPFYKKAEACFWTAEEIDYSSDLKDFEKLNENEKHFIKHVLAFFAASDGIVLENLAVSFLREVQITEAKKFYSFQIAVENIHSETYSLLIDNYIKDEKERLNLFHAIENIPAVKNKALWAAKWINDTNSFAERIVANACVEGILFSGSFCAIFWFKKQNKLHGLTFSNELISRDEGLHTDFNCLIYSLLDNKLPEQMVQNIVKEAGGVEVEKSFICESLPCDLIGMNSRLMSQYIEFVADRLLECLGCSKIFHSKNPFNWMDLISLQGKTNFFEKRVADYQKSGVMAQRKDHVFCLNTEF</sequence>
<keyword id="KW-0215">Deoxyribonucleotide synthesis</keyword>
<keyword id="KW-0408">Iron</keyword>
<keyword id="KW-0479">Metal-binding</keyword>
<keyword id="KW-0560">Oxidoreductase</keyword>
<name>RIR2_PLAFG</name>
<comment type="function">
    <text>Provides the precursors necessary for DNA synthesis. Catalyzes the biosynthesis of deoxyribonucleotides from the corresponding ribonucleotides.</text>
</comment>
<comment type="catalytic activity">
    <reaction evidence="2">
        <text>a 2'-deoxyribonucleoside 5'-diphosphate + [thioredoxin]-disulfide + H2O = a ribonucleoside 5'-diphosphate + [thioredoxin]-dithiol</text>
        <dbReference type="Rhea" id="RHEA:23252"/>
        <dbReference type="Rhea" id="RHEA-COMP:10698"/>
        <dbReference type="Rhea" id="RHEA-COMP:10700"/>
        <dbReference type="ChEBI" id="CHEBI:15377"/>
        <dbReference type="ChEBI" id="CHEBI:29950"/>
        <dbReference type="ChEBI" id="CHEBI:50058"/>
        <dbReference type="ChEBI" id="CHEBI:57930"/>
        <dbReference type="ChEBI" id="CHEBI:73316"/>
        <dbReference type="EC" id="1.17.4.1"/>
    </reaction>
</comment>
<comment type="cofactor">
    <cofactor evidence="1">
        <name>Fe cation</name>
        <dbReference type="ChEBI" id="CHEBI:24875"/>
    </cofactor>
    <text evidence="1">Binds 2 iron ions per subunit.</text>
</comment>
<comment type="subunit">
    <text>Heterodimer of a large and a small subunit.</text>
</comment>
<comment type="similarity">
    <text evidence="3">Belongs to the ribonucleoside diphosphate reductase small chain family.</text>
</comment>